<evidence type="ECO:0000255" key="1"/>
<evidence type="ECO:0000255" key="2">
    <source>
        <dbReference type="HAMAP-Rule" id="MF_00400"/>
    </source>
</evidence>
<organism>
    <name type="scientific">Shigella boydii serotype 4 (strain Sb227)</name>
    <dbReference type="NCBI Taxonomy" id="300268"/>
    <lineage>
        <taxon>Bacteria</taxon>
        <taxon>Pseudomonadati</taxon>
        <taxon>Pseudomonadota</taxon>
        <taxon>Gammaproteobacteria</taxon>
        <taxon>Enterobacterales</taxon>
        <taxon>Enterobacteriaceae</taxon>
        <taxon>Shigella</taxon>
    </lineage>
</organism>
<sequence length="457" mass="49465">MQKYISEARLLLALAIPVILAQIAQTAMGFVDTVMAGGYSATDMAAVAIGTSIWLPAILFGHGLLLALTPVIAQLNGSGRRERIAHQVRQGFWLAGFVSVLIMLVLWNAGYIIRSMENIDPALADKAVGYLRALLWGAPGYLFFQVARNQCEGLAKTKPGMVMGFIGLLVNIPVNYIFIYGHFGMPELGGVGCGVATAAVYWVMFLAMVSYIKRARSMRDIRNEKGTAKPDPAVMKRLIQLGLPIALALFFEVTLFAVVALLVSPLGIVDVAGHQIALNFSSLMFVLPMSLAAAVTIRVGYRLGQGSTLDAQTAARTGLMVGVCMATLTAIFTVSLREQIALLYNDNPEVVTLAAHLMLLAAVYQISDSIQVIGSGILRGYKDTRSIFYITFTAYWVLGLPSGYILALTDLVVEPMGPAGFWIGFIIGLTSAAIMMMLRMRFLQRMPSAIILQRASR</sequence>
<keyword id="KW-0050">Antiport</keyword>
<keyword id="KW-0997">Cell inner membrane</keyword>
<keyword id="KW-1003">Cell membrane</keyword>
<keyword id="KW-0406">Ion transport</keyword>
<keyword id="KW-0472">Membrane</keyword>
<keyword id="KW-0915">Sodium</keyword>
<keyword id="KW-0739">Sodium transport</keyword>
<keyword id="KW-0812">Transmembrane</keyword>
<keyword id="KW-1133">Transmembrane helix</keyword>
<keyword id="KW-0813">Transport</keyword>
<name>MDTK_SHIBS</name>
<proteinExistence type="inferred from homology"/>
<gene>
    <name evidence="2" type="primary">mdtK</name>
    <name type="ordered locus">SBO_1468</name>
</gene>
<feature type="chain" id="PRO_0000279852" description="Multidrug resistance protein MdtK">
    <location>
        <begin position="1"/>
        <end position="457"/>
    </location>
</feature>
<feature type="topological domain" description="Cytoplasmic" evidence="1">
    <location>
        <begin position="1"/>
        <end position="10"/>
    </location>
</feature>
<feature type="transmembrane region" description="Helical" evidence="2">
    <location>
        <begin position="11"/>
        <end position="31"/>
    </location>
</feature>
<feature type="topological domain" description="Periplasmic" evidence="1">
    <location>
        <begin position="32"/>
        <end position="52"/>
    </location>
</feature>
<feature type="transmembrane region" description="Helical" evidence="2">
    <location>
        <begin position="53"/>
        <end position="73"/>
    </location>
</feature>
<feature type="topological domain" description="Cytoplasmic" evidence="1">
    <location>
        <begin position="74"/>
        <end position="92"/>
    </location>
</feature>
<feature type="transmembrane region" description="Helical" evidence="2">
    <location>
        <begin position="93"/>
        <end position="113"/>
    </location>
</feature>
<feature type="topological domain" description="Periplasmic" evidence="1">
    <location>
        <begin position="114"/>
        <end position="126"/>
    </location>
</feature>
<feature type="transmembrane region" description="Helical" evidence="2">
    <location>
        <begin position="127"/>
        <end position="147"/>
    </location>
</feature>
<feature type="topological domain" description="Cytoplasmic" evidence="1">
    <location>
        <begin position="148"/>
        <end position="159"/>
    </location>
</feature>
<feature type="transmembrane region" description="Helical" evidence="2">
    <location>
        <begin position="160"/>
        <end position="180"/>
    </location>
</feature>
<feature type="topological domain" description="Periplasmic" evidence="1">
    <location>
        <begin position="181"/>
        <end position="188"/>
    </location>
</feature>
<feature type="transmembrane region" description="Helical" evidence="2">
    <location>
        <begin position="189"/>
        <end position="209"/>
    </location>
</feature>
<feature type="topological domain" description="Cytoplasmic" evidence="1">
    <location>
        <begin position="210"/>
        <end position="242"/>
    </location>
</feature>
<feature type="transmembrane region" description="Helical" evidence="2">
    <location>
        <begin position="243"/>
        <end position="263"/>
    </location>
</feature>
<feature type="topological domain" description="Periplasmic" evidence="1">
    <location>
        <begin position="264"/>
        <end position="275"/>
    </location>
</feature>
<feature type="transmembrane region" description="Helical" evidence="2">
    <location>
        <begin position="276"/>
        <end position="296"/>
    </location>
</feature>
<feature type="topological domain" description="Cytoplasmic" evidence="1">
    <location>
        <begin position="297"/>
        <end position="313"/>
    </location>
</feature>
<feature type="transmembrane region" description="Helical" evidence="2">
    <location>
        <begin position="314"/>
        <end position="334"/>
    </location>
</feature>
<feature type="topological domain" description="Periplasmic" evidence="1">
    <location>
        <begin position="335"/>
        <end position="349"/>
    </location>
</feature>
<feature type="transmembrane region" description="Helical" evidence="2">
    <location>
        <begin position="350"/>
        <end position="370"/>
    </location>
</feature>
<feature type="topological domain" description="Cytoplasmic" evidence="1">
    <location>
        <begin position="371"/>
        <end position="386"/>
    </location>
</feature>
<feature type="transmembrane region" description="Helical" evidence="2">
    <location>
        <begin position="387"/>
        <end position="407"/>
    </location>
</feature>
<feature type="topological domain" description="Periplasmic" evidence="1">
    <location>
        <begin position="408"/>
        <end position="417"/>
    </location>
</feature>
<feature type="transmembrane region" description="Helical" evidence="2">
    <location>
        <begin position="418"/>
        <end position="438"/>
    </location>
</feature>
<feature type="topological domain" description="Cytoplasmic" evidence="1">
    <location>
        <begin position="439"/>
        <end position="457"/>
    </location>
</feature>
<reference key="1">
    <citation type="journal article" date="2005" name="Nucleic Acids Res.">
        <title>Genome dynamics and diversity of Shigella species, the etiologic agents of bacillary dysentery.</title>
        <authorList>
            <person name="Yang F."/>
            <person name="Yang J."/>
            <person name="Zhang X."/>
            <person name="Chen L."/>
            <person name="Jiang Y."/>
            <person name="Yan Y."/>
            <person name="Tang X."/>
            <person name="Wang J."/>
            <person name="Xiong Z."/>
            <person name="Dong J."/>
            <person name="Xue Y."/>
            <person name="Zhu Y."/>
            <person name="Xu X."/>
            <person name="Sun L."/>
            <person name="Chen S."/>
            <person name="Nie H."/>
            <person name="Peng J."/>
            <person name="Xu J."/>
            <person name="Wang Y."/>
            <person name="Yuan Z."/>
            <person name="Wen Y."/>
            <person name="Yao Z."/>
            <person name="Shen Y."/>
            <person name="Qiang B."/>
            <person name="Hou Y."/>
            <person name="Yu J."/>
            <person name="Jin Q."/>
        </authorList>
    </citation>
    <scope>NUCLEOTIDE SEQUENCE [LARGE SCALE GENOMIC DNA]</scope>
    <source>
        <strain>Sb227</strain>
    </source>
</reference>
<protein>
    <recommendedName>
        <fullName evidence="2">Multidrug resistance protein MdtK</fullName>
    </recommendedName>
    <alternativeName>
        <fullName evidence="2">Multidrug-efflux transporter</fullName>
    </alternativeName>
</protein>
<dbReference type="EMBL" id="CP000036">
    <property type="protein sequence ID" value="ABB66086.1"/>
    <property type="molecule type" value="Genomic_DNA"/>
</dbReference>
<dbReference type="RefSeq" id="WP_001174943.1">
    <property type="nucleotide sequence ID" value="NC_007613.1"/>
</dbReference>
<dbReference type="SMR" id="Q321C2"/>
<dbReference type="KEGG" id="sbo:SBO_1468"/>
<dbReference type="HOGENOM" id="CLU_012893_6_0_6"/>
<dbReference type="Proteomes" id="UP000007067">
    <property type="component" value="Chromosome"/>
</dbReference>
<dbReference type="GO" id="GO:0005886">
    <property type="term" value="C:plasma membrane"/>
    <property type="evidence" value="ECO:0007669"/>
    <property type="project" value="UniProtKB-SubCell"/>
</dbReference>
<dbReference type="GO" id="GO:0015297">
    <property type="term" value="F:antiporter activity"/>
    <property type="evidence" value="ECO:0007669"/>
    <property type="project" value="UniProtKB-UniRule"/>
</dbReference>
<dbReference type="GO" id="GO:0042910">
    <property type="term" value="F:xenobiotic transmembrane transporter activity"/>
    <property type="evidence" value="ECO:0007669"/>
    <property type="project" value="UniProtKB-UniRule"/>
</dbReference>
<dbReference type="GO" id="GO:0006814">
    <property type="term" value="P:sodium ion transport"/>
    <property type="evidence" value="ECO:0007669"/>
    <property type="project" value="UniProtKB-UniRule"/>
</dbReference>
<dbReference type="GO" id="GO:0006855">
    <property type="term" value="P:xenobiotic transmembrane transport"/>
    <property type="evidence" value="ECO:0007669"/>
    <property type="project" value="UniProtKB-UniRule"/>
</dbReference>
<dbReference type="CDD" id="cd13131">
    <property type="entry name" value="MATE_NorM_like"/>
    <property type="match status" value="1"/>
</dbReference>
<dbReference type="HAMAP" id="MF_00400">
    <property type="entry name" value="MdtK"/>
    <property type="match status" value="1"/>
</dbReference>
<dbReference type="InterPro" id="IPR002528">
    <property type="entry name" value="MATE_fam"/>
</dbReference>
<dbReference type="InterPro" id="IPR050222">
    <property type="entry name" value="MATE_MdtK"/>
</dbReference>
<dbReference type="InterPro" id="IPR048279">
    <property type="entry name" value="MdtK-like"/>
</dbReference>
<dbReference type="InterPro" id="IPR022913">
    <property type="entry name" value="Multidrug-R_MdtK"/>
</dbReference>
<dbReference type="NCBIfam" id="TIGR00797">
    <property type="entry name" value="matE"/>
    <property type="match status" value="1"/>
</dbReference>
<dbReference type="PANTHER" id="PTHR43298:SF2">
    <property type="entry name" value="FMN_FAD EXPORTER YEEO-RELATED"/>
    <property type="match status" value="1"/>
</dbReference>
<dbReference type="PANTHER" id="PTHR43298">
    <property type="entry name" value="MULTIDRUG RESISTANCE PROTEIN NORM-RELATED"/>
    <property type="match status" value="1"/>
</dbReference>
<dbReference type="Pfam" id="PF01554">
    <property type="entry name" value="MatE"/>
    <property type="match status" value="2"/>
</dbReference>
<dbReference type="PIRSF" id="PIRSF006603">
    <property type="entry name" value="DinF"/>
    <property type="match status" value="1"/>
</dbReference>
<accession>Q321C2</accession>
<comment type="function">
    <text evidence="2">Multidrug efflux pump that functions probably as a Na(+)/drug antiporter.</text>
</comment>
<comment type="subcellular location">
    <subcellularLocation>
        <location evidence="2">Cell inner membrane</location>
        <topology evidence="2">Multi-pass membrane protein</topology>
    </subcellularLocation>
</comment>
<comment type="similarity">
    <text evidence="2">Belongs to the multi antimicrobial extrusion (MATE) (TC 2.A.66.1) family. MdtK subfamily.</text>
</comment>